<name>FREY_MOUSE</name>
<organism>
    <name type="scientific">Mus musculus</name>
    <name type="common">Mouse</name>
    <dbReference type="NCBI Taxonomy" id="10090"/>
    <lineage>
        <taxon>Eukaryota</taxon>
        <taxon>Metazoa</taxon>
        <taxon>Chordata</taxon>
        <taxon>Craniata</taxon>
        <taxon>Vertebrata</taxon>
        <taxon>Euteleostomi</taxon>
        <taxon>Mammalia</taxon>
        <taxon>Eutheria</taxon>
        <taxon>Euarchontoglires</taxon>
        <taxon>Glires</taxon>
        <taxon>Rodentia</taxon>
        <taxon>Myomorpha</taxon>
        <taxon>Muroidea</taxon>
        <taxon>Muridae</taxon>
        <taxon>Murinae</taxon>
        <taxon>Mus</taxon>
        <taxon>Mus</taxon>
    </lineage>
</organism>
<feature type="chain" id="PRO_0000394236" description="Protein Frey">
    <location>
        <begin position="1"/>
        <end position="99"/>
    </location>
</feature>
<feature type="transmembrane region" description="Helical" evidence="1">
    <location>
        <begin position="10"/>
        <end position="29"/>
    </location>
</feature>
<feature type="region of interest" description="Disordered" evidence="2">
    <location>
        <begin position="60"/>
        <end position="90"/>
    </location>
</feature>
<comment type="function">
    <text evidence="3 4">Key regulator for male fertility expressed transiently in round spermatids where it recruits IZUMO1 at the endoplasmic reticulum (ER) membrane and coordinates the oolemmal binding multimeric complex (IZUMO1 complex) assembly. Upon complete assembly of the IZUMO1 complex, its ER retention is released, facilitating IZUMO1 complex export to the acrosome (PubMed:35960805, PubMed:36050562). Through the interaction with SPPL2C, inhibits its intramembrane protease activity directly accessing the catalytic center of an I-CLiP (PubMed:35960805).</text>
</comment>
<comment type="subunit">
    <text evidence="3">Interacts with SPPL2C (via active sites); the interaction stabilizes FREY1 protein and inhibits SPPL2C proteolytic activity (PubMed:35960805). Interacts with IZUMO1; the interaction retains IZUMO1 at the endoplasmic reticulum membrane and coordinates IZUMO1 complex assembly (PubMed:35960805).</text>
</comment>
<comment type="subcellular location">
    <subcellularLocation>
        <location evidence="3">Endoplasmic reticulum membrane</location>
        <topology evidence="3 4">Single-pass type II membrane protein</topology>
    </subcellularLocation>
</comment>
<comment type="tissue specificity">
    <text evidence="3 4">Expressed in round spermatids (at protein level).</text>
</comment>
<comment type="developmental stage">
    <text evidence="3 4">Expressed in round spermatids belonging to stages V to VII/VIII with no visible expression in earlier or later stages.</text>
</comment>
<comment type="disruption phenotype">
    <text evidence="3 4">Mutant males are normozoospermic infertile (PubMed:35960805, PubMed:36050562). Mutant males neither have significant differences in testis/body weight ratios nor testicular morphology. They do not show any alteration in basic sperm motility (PubMed:35960805). Sperm from mutant males passes through the zona pellucida, but fails to bind to the oocyte membrane and accumulates in the perivitelline space (PubMed:36050562). FREY1 and SPPL2C double knockout mice are normozoospermic infertile (PubMed:35960805).</text>
</comment>
<comment type="sequence caution" evidence="6">
    <conflict type="erroneous gene model prediction">
        <sequence resource="EMBL-CDS" id="CAM20623"/>
    </conflict>
</comment>
<proteinExistence type="evidence at protein level"/>
<sequence>MVLAMLGALYPRAGLSLFLFYLILAGALLRPQPQRSQQSVPEEFSAPLELLQPLSGLVDDYGLRPKHPRPGGPRPLLSQAQQRKRDGPNMADYYYDVNL</sequence>
<protein>
    <recommendedName>
        <fullName evidence="5">Protein Frey</fullName>
    </recommendedName>
    <alternativeName>
        <fullName>Frey regulator of sperm-oocyte fusion 1</fullName>
        <shortName>FREY1</shortName>
    </alternativeName>
</protein>
<accession>Q8CF31</accession>
<accession>A2AHH2</accession>
<reference key="1">
    <citation type="journal article" date="2005" name="Science">
        <title>The transcriptional landscape of the mammalian genome.</title>
        <authorList>
            <person name="Carninci P."/>
            <person name="Kasukawa T."/>
            <person name="Katayama S."/>
            <person name="Gough J."/>
            <person name="Frith M.C."/>
            <person name="Maeda N."/>
            <person name="Oyama R."/>
            <person name="Ravasi T."/>
            <person name="Lenhard B."/>
            <person name="Wells C."/>
            <person name="Kodzius R."/>
            <person name="Shimokawa K."/>
            <person name="Bajic V.B."/>
            <person name="Brenner S.E."/>
            <person name="Batalov S."/>
            <person name="Forrest A.R."/>
            <person name="Zavolan M."/>
            <person name="Davis M.J."/>
            <person name="Wilming L.G."/>
            <person name="Aidinis V."/>
            <person name="Allen J.E."/>
            <person name="Ambesi-Impiombato A."/>
            <person name="Apweiler R."/>
            <person name="Aturaliya R.N."/>
            <person name="Bailey T.L."/>
            <person name="Bansal M."/>
            <person name="Baxter L."/>
            <person name="Beisel K.W."/>
            <person name="Bersano T."/>
            <person name="Bono H."/>
            <person name="Chalk A.M."/>
            <person name="Chiu K.P."/>
            <person name="Choudhary V."/>
            <person name="Christoffels A."/>
            <person name="Clutterbuck D.R."/>
            <person name="Crowe M.L."/>
            <person name="Dalla E."/>
            <person name="Dalrymple B.P."/>
            <person name="de Bono B."/>
            <person name="Della Gatta G."/>
            <person name="di Bernardo D."/>
            <person name="Down T."/>
            <person name="Engstrom P."/>
            <person name="Fagiolini M."/>
            <person name="Faulkner G."/>
            <person name="Fletcher C.F."/>
            <person name="Fukushima T."/>
            <person name="Furuno M."/>
            <person name="Futaki S."/>
            <person name="Gariboldi M."/>
            <person name="Georgii-Hemming P."/>
            <person name="Gingeras T.R."/>
            <person name="Gojobori T."/>
            <person name="Green R.E."/>
            <person name="Gustincich S."/>
            <person name="Harbers M."/>
            <person name="Hayashi Y."/>
            <person name="Hensch T.K."/>
            <person name="Hirokawa N."/>
            <person name="Hill D."/>
            <person name="Huminiecki L."/>
            <person name="Iacono M."/>
            <person name="Ikeo K."/>
            <person name="Iwama A."/>
            <person name="Ishikawa T."/>
            <person name="Jakt M."/>
            <person name="Kanapin A."/>
            <person name="Katoh M."/>
            <person name="Kawasawa Y."/>
            <person name="Kelso J."/>
            <person name="Kitamura H."/>
            <person name="Kitano H."/>
            <person name="Kollias G."/>
            <person name="Krishnan S.P."/>
            <person name="Kruger A."/>
            <person name="Kummerfeld S.K."/>
            <person name="Kurochkin I.V."/>
            <person name="Lareau L.F."/>
            <person name="Lazarevic D."/>
            <person name="Lipovich L."/>
            <person name="Liu J."/>
            <person name="Liuni S."/>
            <person name="McWilliam S."/>
            <person name="Madan Babu M."/>
            <person name="Madera M."/>
            <person name="Marchionni L."/>
            <person name="Matsuda H."/>
            <person name="Matsuzawa S."/>
            <person name="Miki H."/>
            <person name="Mignone F."/>
            <person name="Miyake S."/>
            <person name="Morris K."/>
            <person name="Mottagui-Tabar S."/>
            <person name="Mulder N."/>
            <person name="Nakano N."/>
            <person name="Nakauchi H."/>
            <person name="Ng P."/>
            <person name="Nilsson R."/>
            <person name="Nishiguchi S."/>
            <person name="Nishikawa S."/>
            <person name="Nori F."/>
            <person name="Ohara O."/>
            <person name="Okazaki Y."/>
            <person name="Orlando V."/>
            <person name="Pang K.C."/>
            <person name="Pavan W.J."/>
            <person name="Pavesi G."/>
            <person name="Pesole G."/>
            <person name="Petrovsky N."/>
            <person name="Piazza S."/>
            <person name="Reed J."/>
            <person name="Reid J.F."/>
            <person name="Ring B.Z."/>
            <person name="Ringwald M."/>
            <person name="Rost B."/>
            <person name="Ruan Y."/>
            <person name="Salzberg S.L."/>
            <person name="Sandelin A."/>
            <person name="Schneider C."/>
            <person name="Schoenbach C."/>
            <person name="Sekiguchi K."/>
            <person name="Semple C.A."/>
            <person name="Seno S."/>
            <person name="Sessa L."/>
            <person name="Sheng Y."/>
            <person name="Shibata Y."/>
            <person name="Shimada H."/>
            <person name="Shimada K."/>
            <person name="Silva D."/>
            <person name="Sinclair B."/>
            <person name="Sperling S."/>
            <person name="Stupka E."/>
            <person name="Sugiura K."/>
            <person name="Sultana R."/>
            <person name="Takenaka Y."/>
            <person name="Taki K."/>
            <person name="Tammoja K."/>
            <person name="Tan S.L."/>
            <person name="Tang S."/>
            <person name="Taylor M.S."/>
            <person name="Tegner J."/>
            <person name="Teichmann S.A."/>
            <person name="Ueda H.R."/>
            <person name="van Nimwegen E."/>
            <person name="Verardo R."/>
            <person name="Wei C.L."/>
            <person name="Yagi K."/>
            <person name="Yamanishi H."/>
            <person name="Zabarovsky E."/>
            <person name="Zhu S."/>
            <person name="Zimmer A."/>
            <person name="Hide W."/>
            <person name="Bult C."/>
            <person name="Grimmond S.M."/>
            <person name="Teasdale R.D."/>
            <person name="Liu E.T."/>
            <person name="Brusic V."/>
            <person name="Quackenbush J."/>
            <person name="Wahlestedt C."/>
            <person name="Mattick J.S."/>
            <person name="Hume D.A."/>
            <person name="Kai C."/>
            <person name="Sasaki D."/>
            <person name="Tomaru Y."/>
            <person name="Fukuda S."/>
            <person name="Kanamori-Katayama M."/>
            <person name="Suzuki M."/>
            <person name="Aoki J."/>
            <person name="Arakawa T."/>
            <person name="Iida J."/>
            <person name="Imamura K."/>
            <person name="Itoh M."/>
            <person name="Kato T."/>
            <person name="Kawaji H."/>
            <person name="Kawagashira N."/>
            <person name="Kawashima T."/>
            <person name="Kojima M."/>
            <person name="Kondo S."/>
            <person name="Konno H."/>
            <person name="Nakano K."/>
            <person name="Ninomiya N."/>
            <person name="Nishio T."/>
            <person name="Okada M."/>
            <person name="Plessy C."/>
            <person name="Shibata K."/>
            <person name="Shiraki T."/>
            <person name="Suzuki S."/>
            <person name="Tagami M."/>
            <person name="Waki K."/>
            <person name="Watahiki A."/>
            <person name="Okamura-Oho Y."/>
            <person name="Suzuki H."/>
            <person name="Kawai J."/>
            <person name="Hayashizaki Y."/>
        </authorList>
    </citation>
    <scope>NUCLEOTIDE SEQUENCE [LARGE SCALE MRNA]</scope>
    <source>
        <strain>C57BL/6J</strain>
        <tissue>Testis</tissue>
    </source>
</reference>
<reference key="2">
    <citation type="journal article" date="2009" name="PLoS Biol.">
        <title>Lineage-specific biology revealed by a finished genome assembly of the mouse.</title>
        <authorList>
            <person name="Church D.M."/>
            <person name="Goodstadt L."/>
            <person name="Hillier L.W."/>
            <person name="Zody M.C."/>
            <person name="Goldstein S."/>
            <person name="She X."/>
            <person name="Bult C.J."/>
            <person name="Agarwala R."/>
            <person name="Cherry J.L."/>
            <person name="DiCuccio M."/>
            <person name="Hlavina W."/>
            <person name="Kapustin Y."/>
            <person name="Meric P."/>
            <person name="Maglott D."/>
            <person name="Birtle Z."/>
            <person name="Marques A.C."/>
            <person name="Graves T."/>
            <person name="Zhou S."/>
            <person name="Teague B."/>
            <person name="Potamousis K."/>
            <person name="Churas C."/>
            <person name="Place M."/>
            <person name="Herschleb J."/>
            <person name="Runnheim R."/>
            <person name="Forrest D."/>
            <person name="Amos-Landgraf J."/>
            <person name="Schwartz D.C."/>
            <person name="Cheng Z."/>
            <person name="Lindblad-Toh K."/>
            <person name="Eichler E.E."/>
            <person name="Ponting C.P."/>
        </authorList>
    </citation>
    <scope>NUCLEOTIDE SEQUENCE [LARGE SCALE GENOMIC DNA]</scope>
    <source>
        <strain>C57BL/6J</strain>
    </source>
</reference>
<reference key="3">
    <citation type="journal article" date="2022" name="Mol. Biomed.">
        <title>The vertebrate- and testis- specific transmembrane protein C11ORF94 plays a critical role in sperm-oocyte membrane binding.</title>
        <authorList>
            <person name="Hao H."/>
            <person name="Shi B."/>
            <person name="Zhang J."/>
            <person name="Dai A."/>
            <person name="Li W."/>
            <person name="Chen H."/>
            <person name="Ji W."/>
            <person name="Gong C."/>
            <person name="Zhang C."/>
            <person name="Li J."/>
            <person name="Chen L."/>
            <person name="Yao B."/>
            <person name="Hu P."/>
            <person name="Yang H."/>
            <person name="Brosius J."/>
            <person name="Lai S."/>
            <person name="Shi Q."/>
            <person name="Deng C."/>
        </authorList>
    </citation>
    <scope>FUNCTION</scope>
    <scope>DISRUPTION PHENOTYPE</scope>
    <scope>TISSUE SPECIFICITY</scope>
    <scope>DEVELOPMENTAL STAGE</scope>
</reference>
<reference key="4">
    <citation type="journal article" date="2022" name="Sci. Adv.">
        <title>C11orf94/Frey is a key regulator for male fertility by controlling Izumo1 complex assembly.</title>
        <authorList>
            <person name="Contreras W."/>
            <person name="Wiesehoefer C."/>
            <person name="Schreier D."/>
            <person name="Leinung N."/>
            <person name="Peche P."/>
            <person name="Wennemuth G."/>
            <person name="Gentzel M."/>
            <person name="Schroeder B."/>
            <person name="Mentrup T."/>
        </authorList>
    </citation>
    <scope>FUNCTION</scope>
    <scope>SUBCELLULAR LOCATION</scope>
    <scope>TISSUE SPECIFICITY</scope>
    <scope>DEVELOPMENTAL STAGE</scope>
    <scope>INTERACTION WITH SPPL2C AND IZUMO1</scope>
    <scope>DISRUPTION PHENOTYPE</scope>
</reference>
<dbReference type="EMBL" id="AK006499">
    <property type="protein sequence ID" value="BAC25146.1"/>
    <property type="molecule type" value="mRNA"/>
</dbReference>
<dbReference type="EMBL" id="AL731709">
    <property type="protein sequence ID" value="CAM20622.1"/>
    <property type="molecule type" value="Genomic_DNA"/>
</dbReference>
<dbReference type="EMBL" id="AL731709">
    <property type="protein sequence ID" value="CAM20623.1"/>
    <property type="status" value="ALT_SEQ"/>
    <property type="molecule type" value="Genomic_DNA"/>
</dbReference>
<dbReference type="CCDS" id="CCDS16445.1"/>
<dbReference type="RefSeq" id="NP_898935.1">
    <property type="nucleotide sequence ID" value="NM_183112.3"/>
</dbReference>
<dbReference type="PhosphoSitePlus" id="Q8CF31"/>
<dbReference type="PaxDb" id="10090-ENSMUSP00000051464"/>
<dbReference type="Antibodypedia" id="71796">
    <property type="antibodies" value="7 antibodies from 6 providers"/>
</dbReference>
<dbReference type="Ensembl" id="ENSMUST00000054316.9">
    <property type="protein sequence ID" value="ENSMUSP00000051464.2"/>
    <property type="gene ID" value="ENSMUSG00000044916.11"/>
</dbReference>
<dbReference type="GeneID" id="75641"/>
<dbReference type="KEGG" id="mmu:75641"/>
<dbReference type="UCSC" id="uc008kxu.2">
    <property type="organism name" value="mouse"/>
</dbReference>
<dbReference type="AGR" id="MGI:1916742"/>
<dbReference type="CTD" id="143678"/>
<dbReference type="MGI" id="MGI:1916742">
    <property type="gene designation" value="Frey1"/>
</dbReference>
<dbReference type="VEuPathDB" id="HostDB:ENSMUSG00000044916"/>
<dbReference type="eggNOG" id="ENOG502SCAR">
    <property type="taxonomic scope" value="Eukaryota"/>
</dbReference>
<dbReference type="GeneTree" id="ENSGT00390000018235"/>
<dbReference type="HOGENOM" id="CLU_2319619_0_0_1"/>
<dbReference type="InParanoid" id="Q8CF31"/>
<dbReference type="OMA" id="IRPKHPW"/>
<dbReference type="PhylomeDB" id="Q8CF31"/>
<dbReference type="TreeFam" id="TF339805"/>
<dbReference type="BioGRID-ORCS" id="75641">
    <property type="hits" value="4 hits in 77 CRISPR screens"/>
</dbReference>
<dbReference type="PRO" id="PR:Q8CF31"/>
<dbReference type="Proteomes" id="UP000000589">
    <property type="component" value="Chromosome 2"/>
</dbReference>
<dbReference type="RNAct" id="Q8CF31">
    <property type="molecule type" value="protein"/>
</dbReference>
<dbReference type="Bgee" id="ENSMUSG00000044916">
    <property type="expression patterns" value="Expressed in seminiferous tubule of testis and 143 other cell types or tissues"/>
</dbReference>
<dbReference type="ExpressionAtlas" id="Q8CF31">
    <property type="expression patterns" value="baseline and differential"/>
</dbReference>
<dbReference type="GO" id="GO:0005789">
    <property type="term" value="C:endoplasmic reticulum membrane"/>
    <property type="evidence" value="ECO:0000314"/>
    <property type="project" value="UniProtKB"/>
</dbReference>
<dbReference type="GO" id="GO:0016020">
    <property type="term" value="C:membrane"/>
    <property type="evidence" value="ECO:0000314"/>
    <property type="project" value="MGI"/>
</dbReference>
<dbReference type="GO" id="GO:0030674">
    <property type="term" value="F:protein-macromolecule adaptor activity"/>
    <property type="evidence" value="ECO:0000314"/>
    <property type="project" value="UniProtKB"/>
</dbReference>
<dbReference type="GO" id="GO:0007342">
    <property type="term" value="P:fusion of sperm to egg plasma membrane involved in single fertilization"/>
    <property type="evidence" value="ECO:0000315"/>
    <property type="project" value="UniProtKB"/>
</dbReference>
<dbReference type="GO" id="GO:0010467">
    <property type="term" value="P:gene expression"/>
    <property type="evidence" value="ECO:0000315"/>
    <property type="project" value="MGI"/>
</dbReference>
<dbReference type="GO" id="GO:0035437">
    <property type="term" value="P:maintenance of protein localization in endoplasmic reticulum"/>
    <property type="evidence" value="ECO:0000314"/>
    <property type="project" value="UniProtKB"/>
</dbReference>
<dbReference type="GO" id="GO:0006487">
    <property type="term" value="P:protein N-linked glycosylation"/>
    <property type="evidence" value="ECO:0000315"/>
    <property type="project" value="MGI"/>
</dbReference>
<dbReference type="GO" id="GO:0050821">
    <property type="term" value="P:protein stabilization"/>
    <property type="evidence" value="ECO:0000315"/>
    <property type="project" value="MGI"/>
</dbReference>
<dbReference type="GO" id="GO:0016567">
    <property type="term" value="P:protein ubiquitination"/>
    <property type="evidence" value="ECO:0000315"/>
    <property type="project" value="MGI"/>
</dbReference>
<dbReference type="GO" id="GO:0065003">
    <property type="term" value="P:protein-containing complex assembly"/>
    <property type="evidence" value="ECO:0000314"/>
    <property type="project" value="UniProt"/>
</dbReference>
<dbReference type="GO" id="GO:0007338">
    <property type="term" value="P:single fertilization"/>
    <property type="evidence" value="ECO:0000315"/>
    <property type="project" value="MGI"/>
</dbReference>
<dbReference type="GO" id="GO:0035036">
    <property type="term" value="P:sperm-egg recognition"/>
    <property type="evidence" value="ECO:0000315"/>
    <property type="project" value="UniProtKB"/>
</dbReference>
<dbReference type="GO" id="GO:0007286">
    <property type="term" value="P:spermatid development"/>
    <property type="evidence" value="ECO:0000315"/>
    <property type="project" value="MGI"/>
</dbReference>
<dbReference type="InterPro" id="IPR031748">
    <property type="entry name" value="Frey"/>
</dbReference>
<dbReference type="PANTHER" id="PTHR37872:SF1">
    <property type="entry name" value="PROTEIN FREY 1"/>
    <property type="match status" value="1"/>
</dbReference>
<dbReference type="PANTHER" id="PTHR37872">
    <property type="entry name" value="SIMILAR TO RIKEN CDNA 1700029I15"/>
    <property type="match status" value="1"/>
</dbReference>
<dbReference type="Pfam" id="PF15878">
    <property type="entry name" value="Frey"/>
    <property type="match status" value="1"/>
</dbReference>
<gene>
    <name evidence="5" type="primary">Frey1</name>
    <name type="synonym">Frey</name>
</gene>
<keyword id="KW-0256">Endoplasmic reticulum</keyword>
<keyword id="KW-0472">Membrane</keyword>
<keyword id="KW-1185">Reference proteome</keyword>
<keyword id="KW-0812">Transmembrane</keyword>
<keyword id="KW-1133">Transmembrane helix</keyword>
<evidence type="ECO:0000255" key="1"/>
<evidence type="ECO:0000256" key="2">
    <source>
        <dbReference type="SAM" id="MobiDB-lite"/>
    </source>
</evidence>
<evidence type="ECO:0000269" key="3">
    <source>
    </source>
</evidence>
<evidence type="ECO:0000269" key="4">
    <source>
    </source>
</evidence>
<evidence type="ECO:0000303" key="5">
    <source>
    </source>
</evidence>
<evidence type="ECO:0000305" key="6"/>